<organism>
    <name type="scientific">Escherichia coli</name>
    <dbReference type="NCBI Taxonomy" id="562"/>
    <lineage>
        <taxon>Bacteria</taxon>
        <taxon>Pseudomonadati</taxon>
        <taxon>Pseudomonadota</taxon>
        <taxon>Gammaproteobacteria</taxon>
        <taxon>Enterobacterales</taxon>
        <taxon>Enterobacteriaceae</taxon>
        <taxon>Escherichia</taxon>
    </lineage>
</organism>
<proteinExistence type="predicted"/>
<accession>P29368</accession>
<sequence length="286" mass="31759">MKITDHKLSEGIALTFRVPEGNIKHPLIILCHGFCGIRNVLLPCFANAFTEAGFATITFDYRGFGESDGERGRLVPAMQTEDIISVINWAEKQECIDNQRIGLWGTSLGGGHVFSARAQDQRVKCIVSQLAFADGDVLVTGEMNESERASFLSTLNKMAEKKKNTGKEMFVGVTRVLSDNESKVFFEKVKGQYPEMDIKIPFLTVMETLQYKPAESAAKVQCPVLIVIAGQDSVNPPEQGKALYDAVASGTKELYEEADACHYDIYEGAFFERVAAVQTQWFKKHL</sequence>
<protein>
    <recommendedName>
        <fullName>Uncharacterized 31.7 kDa protein in traX-finO intergenic region</fullName>
    </recommendedName>
</protein>
<geneLocation type="plasmid">
    <name>R6-5</name>
</geneLocation>
<dbReference type="EMBL" id="M38048">
    <property type="protein sequence ID" value="AAA98315.1"/>
    <property type="molecule type" value="Genomic_DNA"/>
</dbReference>
<dbReference type="PIR" id="JQ1341">
    <property type="entry name" value="JQ1341"/>
</dbReference>
<dbReference type="SMR" id="P29368"/>
<dbReference type="ESTHER" id="ecoli-ypt1">
    <property type="family name" value="Xaa-Pro-like_dom"/>
</dbReference>
<dbReference type="Gene3D" id="1.10.10.800">
    <property type="match status" value="1"/>
</dbReference>
<dbReference type="Gene3D" id="3.40.50.1820">
    <property type="entry name" value="alpha/beta hydrolase"/>
    <property type="match status" value="1"/>
</dbReference>
<dbReference type="InterPro" id="IPR000073">
    <property type="entry name" value="AB_hydrolase_1"/>
</dbReference>
<dbReference type="InterPro" id="IPR029058">
    <property type="entry name" value="AB_hydrolase_fold"/>
</dbReference>
<dbReference type="InterPro" id="IPR051411">
    <property type="entry name" value="Polyketide_trans_af380"/>
</dbReference>
<dbReference type="PANTHER" id="PTHR47751:SF2">
    <property type="entry name" value="DLTD N-TERMINAL DOMAIN PROTEIN (AFU_ORTHOLOGUE AFUA_8G00380)-RELATED"/>
    <property type="match status" value="1"/>
</dbReference>
<dbReference type="PANTHER" id="PTHR47751">
    <property type="entry name" value="SUPERFAMILY HYDROLASE, PUTATIVE (AFU_ORTHOLOGUE AFUA_2G16580)-RELATED"/>
    <property type="match status" value="1"/>
</dbReference>
<dbReference type="Pfam" id="PF00561">
    <property type="entry name" value="Abhydrolase_1"/>
    <property type="match status" value="1"/>
</dbReference>
<dbReference type="SUPFAM" id="SSF53474">
    <property type="entry name" value="alpha/beta-Hydrolases"/>
    <property type="match status" value="1"/>
</dbReference>
<evidence type="ECO:0000255" key="1"/>
<evidence type="ECO:0000305" key="2"/>
<name>YPT1_ECOLX</name>
<keyword id="KW-0614">Plasmid</keyword>
<reference key="1">
    <citation type="journal article" date="1991" name="Gene">
        <title>Sequence and conservation of genes at the distal end of the transfer region on plasmids F and R6-5.</title>
        <authorList>
            <person name="Cram D.S."/>
            <person name="Loh S.M."/>
            <person name="Cheah K.C."/>
            <person name="Skurray R.A."/>
        </authorList>
    </citation>
    <scope>NUCLEOTIDE SEQUENCE [GENOMIC DNA]</scope>
</reference>
<feature type="chain" id="PRO_0000068539" description="Uncharacterized 31.7 kDa protein in traX-finO intergenic region">
    <location>
        <begin position="1"/>
        <end position="286"/>
    </location>
</feature>
<feature type="domain" description="AB hydrolase-1" evidence="1">
    <location>
        <begin position="26"/>
        <end position="268"/>
    </location>
</feature>
<comment type="similarity">
    <text evidence="2">To E.coli YcjY.</text>
</comment>